<proteinExistence type="evidence at protein level"/>
<evidence type="ECO:0000250" key="1"/>
<evidence type="ECO:0000255" key="2"/>
<evidence type="ECO:0000256" key="3">
    <source>
        <dbReference type="SAM" id="MobiDB-lite"/>
    </source>
</evidence>
<evidence type="ECO:0000305" key="4"/>
<evidence type="ECO:0007744" key="5">
    <source>
    </source>
</evidence>
<evidence type="ECO:0007744" key="6">
    <source>
    </source>
</evidence>
<comment type="function">
    <text evidence="1">Implicated in oncotic cell death, characterized by cell swelling, organelle swelling, vacuolization and increased membrane permeability.</text>
</comment>
<comment type="subcellular location">
    <subcellularLocation>
        <location evidence="4">Membrane</location>
        <topology evidence="4">Single-pass type I membrane protein</topology>
    </subcellularLocation>
</comment>
<comment type="similarity">
    <text evidence="4">Belongs to the CD164 family.</text>
</comment>
<reference key="1">
    <citation type="journal article" date="2005" name="Science">
        <title>The transcriptional landscape of the mammalian genome.</title>
        <authorList>
            <person name="Carninci P."/>
            <person name="Kasukawa T."/>
            <person name="Katayama S."/>
            <person name="Gough J."/>
            <person name="Frith M.C."/>
            <person name="Maeda N."/>
            <person name="Oyama R."/>
            <person name="Ravasi T."/>
            <person name="Lenhard B."/>
            <person name="Wells C."/>
            <person name="Kodzius R."/>
            <person name="Shimokawa K."/>
            <person name="Bajic V.B."/>
            <person name="Brenner S.E."/>
            <person name="Batalov S."/>
            <person name="Forrest A.R."/>
            <person name="Zavolan M."/>
            <person name="Davis M.J."/>
            <person name="Wilming L.G."/>
            <person name="Aidinis V."/>
            <person name="Allen J.E."/>
            <person name="Ambesi-Impiombato A."/>
            <person name="Apweiler R."/>
            <person name="Aturaliya R.N."/>
            <person name="Bailey T.L."/>
            <person name="Bansal M."/>
            <person name="Baxter L."/>
            <person name="Beisel K.W."/>
            <person name="Bersano T."/>
            <person name="Bono H."/>
            <person name="Chalk A.M."/>
            <person name="Chiu K.P."/>
            <person name="Choudhary V."/>
            <person name="Christoffels A."/>
            <person name="Clutterbuck D.R."/>
            <person name="Crowe M.L."/>
            <person name="Dalla E."/>
            <person name="Dalrymple B.P."/>
            <person name="de Bono B."/>
            <person name="Della Gatta G."/>
            <person name="di Bernardo D."/>
            <person name="Down T."/>
            <person name="Engstrom P."/>
            <person name="Fagiolini M."/>
            <person name="Faulkner G."/>
            <person name="Fletcher C.F."/>
            <person name="Fukushima T."/>
            <person name="Furuno M."/>
            <person name="Futaki S."/>
            <person name="Gariboldi M."/>
            <person name="Georgii-Hemming P."/>
            <person name="Gingeras T.R."/>
            <person name="Gojobori T."/>
            <person name="Green R.E."/>
            <person name="Gustincich S."/>
            <person name="Harbers M."/>
            <person name="Hayashi Y."/>
            <person name="Hensch T.K."/>
            <person name="Hirokawa N."/>
            <person name="Hill D."/>
            <person name="Huminiecki L."/>
            <person name="Iacono M."/>
            <person name="Ikeo K."/>
            <person name="Iwama A."/>
            <person name="Ishikawa T."/>
            <person name="Jakt M."/>
            <person name="Kanapin A."/>
            <person name="Katoh M."/>
            <person name="Kawasawa Y."/>
            <person name="Kelso J."/>
            <person name="Kitamura H."/>
            <person name="Kitano H."/>
            <person name="Kollias G."/>
            <person name="Krishnan S.P."/>
            <person name="Kruger A."/>
            <person name="Kummerfeld S.K."/>
            <person name="Kurochkin I.V."/>
            <person name="Lareau L.F."/>
            <person name="Lazarevic D."/>
            <person name="Lipovich L."/>
            <person name="Liu J."/>
            <person name="Liuni S."/>
            <person name="McWilliam S."/>
            <person name="Madan Babu M."/>
            <person name="Madera M."/>
            <person name="Marchionni L."/>
            <person name="Matsuda H."/>
            <person name="Matsuzawa S."/>
            <person name="Miki H."/>
            <person name="Mignone F."/>
            <person name="Miyake S."/>
            <person name="Morris K."/>
            <person name="Mottagui-Tabar S."/>
            <person name="Mulder N."/>
            <person name="Nakano N."/>
            <person name="Nakauchi H."/>
            <person name="Ng P."/>
            <person name="Nilsson R."/>
            <person name="Nishiguchi S."/>
            <person name="Nishikawa S."/>
            <person name="Nori F."/>
            <person name="Ohara O."/>
            <person name="Okazaki Y."/>
            <person name="Orlando V."/>
            <person name="Pang K.C."/>
            <person name="Pavan W.J."/>
            <person name="Pavesi G."/>
            <person name="Pesole G."/>
            <person name="Petrovsky N."/>
            <person name="Piazza S."/>
            <person name="Reed J."/>
            <person name="Reid J.F."/>
            <person name="Ring B.Z."/>
            <person name="Ringwald M."/>
            <person name="Rost B."/>
            <person name="Ruan Y."/>
            <person name="Salzberg S.L."/>
            <person name="Sandelin A."/>
            <person name="Schneider C."/>
            <person name="Schoenbach C."/>
            <person name="Sekiguchi K."/>
            <person name="Semple C.A."/>
            <person name="Seno S."/>
            <person name="Sessa L."/>
            <person name="Sheng Y."/>
            <person name="Shibata Y."/>
            <person name="Shimada H."/>
            <person name="Shimada K."/>
            <person name="Silva D."/>
            <person name="Sinclair B."/>
            <person name="Sperling S."/>
            <person name="Stupka E."/>
            <person name="Sugiura K."/>
            <person name="Sultana R."/>
            <person name="Takenaka Y."/>
            <person name="Taki K."/>
            <person name="Tammoja K."/>
            <person name="Tan S.L."/>
            <person name="Tang S."/>
            <person name="Taylor M.S."/>
            <person name="Tegner J."/>
            <person name="Teichmann S.A."/>
            <person name="Ueda H.R."/>
            <person name="van Nimwegen E."/>
            <person name="Verardo R."/>
            <person name="Wei C.L."/>
            <person name="Yagi K."/>
            <person name="Yamanishi H."/>
            <person name="Zabarovsky E."/>
            <person name="Zhu S."/>
            <person name="Zimmer A."/>
            <person name="Hide W."/>
            <person name="Bult C."/>
            <person name="Grimmond S.M."/>
            <person name="Teasdale R.D."/>
            <person name="Liu E.T."/>
            <person name="Brusic V."/>
            <person name="Quackenbush J."/>
            <person name="Wahlestedt C."/>
            <person name="Mattick J.S."/>
            <person name="Hume D.A."/>
            <person name="Kai C."/>
            <person name="Sasaki D."/>
            <person name="Tomaru Y."/>
            <person name="Fukuda S."/>
            <person name="Kanamori-Katayama M."/>
            <person name="Suzuki M."/>
            <person name="Aoki J."/>
            <person name="Arakawa T."/>
            <person name="Iida J."/>
            <person name="Imamura K."/>
            <person name="Itoh M."/>
            <person name="Kato T."/>
            <person name="Kawaji H."/>
            <person name="Kawagashira N."/>
            <person name="Kawashima T."/>
            <person name="Kojima M."/>
            <person name="Kondo S."/>
            <person name="Konno H."/>
            <person name="Nakano K."/>
            <person name="Ninomiya N."/>
            <person name="Nishio T."/>
            <person name="Okada M."/>
            <person name="Plessy C."/>
            <person name="Shibata K."/>
            <person name="Shiraki T."/>
            <person name="Suzuki S."/>
            <person name="Tagami M."/>
            <person name="Waki K."/>
            <person name="Watahiki A."/>
            <person name="Okamura-Oho Y."/>
            <person name="Suzuki H."/>
            <person name="Kawai J."/>
            <person name="Hayashizaki Y."/>
        </authorList>
    </citation>
    <scope>NUCLEOTIDE SEQUENCE [LARGE SCALE MRNA]</scope>
    <source>
        <strain>C57BL/6J</strain>
        <strain>NOD</strain>
        <tissue>Bone marrow</tissue>
        <tissue>Cerebellum</tissue>
        <tissue>Mammary gland</tissue>
        <tissue>Spleen</tissue>
        <tissue>Tongue</tissue>
    </source>
</reference>
<reference key="2">
    <citation type="journal article" date="2004" name="Genome Res.">
        <title>The status, quality, and expansion of the NIH full-length cDNA project: the Mammalian Gene Collection (MGC).</title>
        <authorList>
            <consortium name="The MGC Project Team"/>
        </authorList>
    </citation>
    <scope>NUCLEOTIDE SEQUENCE [LARGE SCALE MRNA]</scope>
    <source>
        <strain>FVB/N-3</strain>
        <strain>NMRI</strain>
        <tissue>Mammary tumor</tissue>
    </source>
</reference>
<reference key="3">
    <citation type="journal article" date="2009" name="Immunity">
        <title>The phagosomal proteome in interferon-gamma-activated macrophages.</title>
        <authorList>
            <person name="Trost M."/>
            <person name="English L."/>
            <person name="Lemieux S."/>
            <person name="Courcelles M."/>
            <person name="Desjardins M."/>
            <person name="Thibault P."/>
        </authorList>
    </citation>
    <scope>PHOSPHORYLATION [LARGE SCALE ANALYSIS] AT SER-187</scope>
    <scope>IDENTIFICATION BY MASS SPECTROMETRY [LARGE SCALE ANALYSIS]</scope>
</reference>
<reference key="4">
    <citation type="journal article" date="2010" name="Cell">
        <title>A tissue-specific atlas of mouse protein phosphorylation and expression.</title>
        <authorList>
            <person name="Huttlin E.L."/>
            <person name="Jedrychowski M.P."/>
            <person name="Elias J.E."/>
            <person name="Goswami T."/>
            <person name="Rad R."/>
            <person name="Beausoleil S.A."/>
            <person name="Villen J."/>
            <person name="Haas W."/>
            <person name="Sowa M.E."/>
            <person name="Gygi S.P."/>
        </authorList>
    </citation>
    <scope>PHOSPHORYLATION [LARGE SCALE ANALYSIS] AT SER-187</scope>
    <scope>IDENTIFICATION BY MASS SPECTROMETRY [LARGE SCALE ANALYSIS]</scope>
    <source>
        <tissue>Kidney</tissue>
        <tissue>Lung</tissue>
    </source>
</reference>
<accession>Q91Z22</accession>
<accession>Q3T9F6</accession>
<accession>Q3TLL2</accession>
<accession>Q3U1R6</accession>
<accession>Q8CEX4</accession>
<name>PORIM_MOUSE</name>
<keyword id="KW-0325">Glycoprotein</keyword>
<keyword id="KW-0472">Membrane</keyword>
<keyword id="KW-0597">Phosphoprotein</keyword>
<keyword id="KW-0675">Receptor</keyword>
<keyword id="KW-1185">Reference proteome</keyword>
<keyword id="KW-0732">Signal</keyword>
<keyword id="KW-0812">Transmembrane</keyword>
<keyword id="KW-1133">Transmembrane helix</keyword>
<organism>
    <name type="scientific">Mus musculus</name>
    <name type="common">Mouse</name>
    <dbReference type="NCBI Taxonomy" id="10090"/>
    <lineage>
        <taxon>Eukaryota</taxon>
        <taxon>Metazoa</taxon>
        <taxon>Chordata</taxon>
        <taxon>Craniata</taxon>
        <taxon>Vertebrata</taxon>
        <taxon>Euteleostomi</taxon>
        <taxon>Mammalia</taxon>
        <taxon>Eutheria</taxon>
        <taxon>Euarchontoglires</taxon>
        <taxon>Glires</taxon>
        <taxon>Rodentia</taxon>
        <taxon>Myomorpha</taxon>
        <taxon>Muroidea</taxon>
        <taxon>Muridae</taxon>
        <taxon>Murinae</taxon>
        <taxon>Mus</taxon>
        <taxon>Mus</taxon>
    </lineage>
</organism>
<gene>
    <name type="primary">Tmem123</name>
</gene>
<dbReference type="EMBL" id="AK010163">
    <property type="protein sequence ID" value="BAC25282.1"/>
    <property type="molecule type" value="mRNA"/>
</dbReference>
<dbReference type="EMBL" id="AK150361">
    <property type="protein sequence ID" value="BAE29496.1"/>
    <property type="molecule type" value="mRNA"/>
</dbReference>
<dbReference type="EMBL" id="AK151044">
    <property type="protein sequence ID" value="BAE30061.1"/>
    <property type="molecule type" value="mRNA"/>
</dbReference>
<dbReference type="EMBL" id="AK152180">
    <property type="protein sequence ID" value="BAE31011.1"/>
    <property type="molecule type" value="mRNA"/>
</dbReference>
<dbReference type="EMBL" id="AK152423">
    <property type="protein sequence ID" value="BAE31207.1"/>
    <property type="molecule type" value="mRNA"/>
</dbReference>
<dbReference type="EMBL" id="AK153122">
    <property type="protein sequence ID" value="BAE31737.1"/>
    <property type="molecule type" value="mRNA"/>
</dbReference>
<dbReference type="EMBL" id="AK153539">
    <property type="protein sequence ID" value="BAE32076.1"/>
    <property type="molecule type" value="mRNA"/>
</dbReference>
<dbReference type="EMBL" id="AK155767">
    <property type="protein sequence ID" value="BAE33427.1"/>
    <property type="molecule type" value="mRNA"/>
</dbReference>
<dbReference type="EMBL" id="AK162610">
    <property type="protein sequence ID" value="BAE36988.1"/>
    <property type="molecule type" value="mRNA"/>
</dbReference>
<dbReference type="EMBL" id="AK166444">
    <property type="protein sequence ID" value="BAE38780.1"/>
    <property type="molecule type" value="mRNA"/>
</dbReference>
<dbReference type="EMBL" id="AK170823">
    <property type="protein sequence ID" value="BAE42054.1"/>
    <property type="molecule type" value="mRNA"/>
</dbReference>
<dbReference type="EMBL" id="AK172352">
    <property type="protein sequence ID" value="BAE42962.1"/>
    <property type="molecule type" value="mRNA"/>
</dbReference>
<dbReference type="EMBL" id="AK172553">
    <property type="protein sequence ID" value="BAE43065.1"/>
    <property type="molecule type" value="mRNA"/>
</dbReference>
<dbReference type="EMBL" id="AK172701">
    <property type="protein sequence ID" value="BAE43135.1"/>
    <property type="molecule type" value="mRNA"/>
</dbReference>
<dbReference type="EMBL" id="BC010292">
    <property type="protein sequence ID" value="AAH10292.1"/>
    <property type="molecule type" value="mRNA"/>
</dbReference>
<dbReference type="EMBL" id="BC086319">
    <property type="protein sequence ID" value="AAH86319.1"/>
    <property type="molecule type" value="mRNA"/>
</dbReference>
<dbReference type="CCDS" id="CCDS22810.1"/>
<dbReference type="RefSeq" id="NP_598500.1">
    <property type="nucleotide sequence ID" value="NM_133739.2"/>
</dbReference>
<dbReference type="SMR" id="Q91Z22"/>
<dbReference type="FunCoup" id="Q91Z22">
    <property type="interactions" value="34"/>
</dbReference>
<dbReference type="STRING" id="10090.ENSMUSP00000051966"/>
<dbReference type="GlyCosmos" id="Q91Z22">
    <property type="glycosylation" value="6 sites, No reported glycans"/>
</dbReference>
<dbReference type="GlyGen" id="Q91Z22">
    <property type="glycosylation" value="6 sites"/>
</dbReference>
<dbReference type="iPTMnet" id="Q91Z22"/>
<dbReference type="PhosphoSitePlus" id="Q91Z22"/>
<dbReference type="PaxDb" id="10090-ENSMUSP00000051966"/>
<dbReference type="PeptideAtlas" id="Q91Z22"/>
<dbReference type="ProteomicsDB" id="291772"/>
<dbReference type="Antibodypedia" id="31754">
    <property type="antibodies" value="152 antibodies from 27 providers"/>
</dbReference>
<dbReference type="DNASU" id="71929"/>
<dbReference type="Ensembl" id="ENSMUST00000052865.16">
    <property type="protein sequence ID" value="ENSMUSP00000051966.10"/>
    <property type="gene ID" value="ENSMUSG00000050912.16"/>
</dbReference>
<dbReference type="GeneID" id="71929"/>
<dbReference type="KEGG" id="mmu:71929"/>
<dbReference type="UCSC" id="uc009ocx.2">
    <property type="organism name" value="mouse"/>
</dbReference>
<dbReference type="AGR" id="MGI:1919179"/>
<dbReference type="CTD" id="114908"/>
<dbReference type="MGI" id="MGI:1919179">
    <property type="gene designation" value="Tmem123"/>
</dbReference>
<dbReference type="VEuPathDB" id="HostDB:ENSMUSG00000050912"/>
<dbReference type="eggNOG" id="ENOG502SAV2">
    <property type="taxonomic scope" value="Eukaryota"/>
</dbReference>
<dbReference type="GeneTree" id="ENSGT00530000063929"/>
<dbReference type="HOGENOM" id="CLU_121016_0_0_1"/>
<dbReference type="InParanoid" id="Q91Z22"/>
<dbReference type="OMA" id="STIEPAX"/>
<dbReference type="OrthoDB" id="6160056at2759"/>
<dbReference type="PhylomeDB" id="Q91Z22"/>
<dbReference type="TreeFam" id="TF350123"/>
<dbReference type="BioGRID-ORCS" id="71929">
    <property type="hits" value="2 hits in 76 CRISPR screens"/>
</dbReference>
<dbReference type="ChiTaRS" id="Tmem123">
    <property type="organism name" value="mouse"/>
</dbReference>
<dbReference type="PRO" id="PR:Q91Z22"/>
<dbReference type="Proteomes" id="UP000000589">
    <property type="component" value="Chromosome 9"/>
</dbReference>
<dbReference type="RNAct" id="Q91Z22">
    <property type="molecule type" value="protein"/>
</dbReference>
<dbReference type="Bgee" id="ENSMUSG00000050912">
    <property type="expression patterns" value="Expressed in peripheral lymph node and 261 other cell types or tissues"/>
</dbReference>
<dbReference type="ExpressionAtlas" id="Q91Z22">
    <property type="expression patterns" value="baseline and differential"/>
</dbReference>
<dbReference type="GO" id="GO:0016020">
    <property type="term" value="C:membrane"/>
    <property type="evidence" value="ECO:0007669"/>
    <property type="project" value="UniProtKB-SubCell"/>
</dbReference>
<dbReference type="InterPro" id="IPR007947">
    <property type="entry name" value="CD164_MGC24"/>
</dbReference>
<dbReference type="PANTHER" id="PTHR11337">
    <property type="entry name" value="MUCIN/PORIMIN"/>
    <property type="match status" value="1"/>
</dbReference>
<dbReference type="PANTHER" id="PTHR11337:SF14">
    <property type="entry name" value="PORIMIN"/>
    <property type="match status" value="1"/>
</dbReference>
<dbReference type="Pfam" id="PF05283">
    <property type="entry name" value="MGC-24"/>
    <property type="match status" value="1"/>
</dbReference>
<feature type="signal peptide" evidence="2">
    <location>
        <begin position="1"/>
        <end position="23"/>
    </location>
</feature>
<feature type="chain" id="PRO_0000045059" description="Porimin">
    <location>
        <begin position="24"/>
        <end position="195"/>
    </location>
</feature>
<feature type="topological domain" description="Extracellular" evidence="2">
    <location>
        <begin position="24"/>
        <end position="152"/>
    </location>
</feature>
<feature type="transmembrane region" description="Helical" evidence="2">
    <location>
        <begin position="153"/>
        <end position="173"/>
    </location>
</feature>
<feature type="topological domain" description="Cytoplasmic" evidence="2">
    <location>
        <begin position="174"/>
        <end position="195"/>
    </location>
</feature>
<feature type="region of interest" description="Disordered" evidence="3">
    <location>
        <begin position="99"/>
        <end position="127"/>
    </location>
</feature>
<feature type="compositionally biased region" description="Polar residues" evidence="3">
    <location>
        <begin position="101"/>
        <end position="126"/>
    </location>
</feature>
<feature type="modified residue" description="Phosphoserine" evidence="5 6">
    <location>
        <position position="187"/>
    </location>
</feature>
<feature type="glycosylation site" description="N-linked (GlcNAc...) asparagine" evidence="2">
    <location>
        <position position="36"/>
    </location>
</feature>
<feature type="glycosylation site" description="N-linked (GlcNAc...) asparagine" evidence="2">
    <location>
        <position position="45"/>
    </location>
</feature>
<feature type="glycosylation site" description="N-linked (GlcNAc...) asparagine" evidence="2">
    <location>
        <position position="51"/>
    </location>
</feature>
<feature type="glycosylation site" description="N-linked (GlcNAc...) asparagine" evidence="2">
    <location>
        <position position="59"/>
    </location>
</feature>
<feature type="glycosylation site" description="N-linked (GlcNAc...) asparagine" evidence="2">
    <location>
        <position position="109"/>
    </location>
</feature>
<feature type="glycosylation site" description="N-linked (GlcNAc...) asparagine" evidence="2">
    <location>
        <position position="115"/>
    </location>
</feature>
<feature type="sequence conflict" description="In Ref. 1; BAE42962/BAE43065/BAE43135." evidence="4" ref="1">
    <original>D</original>
    <variation>E</variation>
    <location>
        <position position="25"/>
    </location>
</feature>
<feature type="sequence conflict" description="In Ref. 1; BAE38780." evidence="4" ref="1">
    <original>A</original>
    <variation>V</variation>
    <location>
        <position position="68"/>
    </location>
</feature>
<feature type="sequence conflict" description="In Ref. 1; BAE33427." evidence="4" ref="1">
    <original>S</original>
    <variation>T</variation>
    <location>
        <position position="106"/>
    </location>
</feature>
<feature type="sequence conflict" description="In Ref. 1; BAC25282." evidence="4" ref="1">
    <original>L</original>
    <variation>W</variation>
    <location>
        <position position="132"/>
    </location>
</feature>
<sequence length="195" mass="20178">MALCARAALLLGVLQVLALLGAAQDPTDAQGSASGNHSVLTSNINITENTNQTMSVVSNQTSEMQSTAKPSVLPKTTTLITVKPATIVKISTPGVLPHVTPTASKSTPNASASPNSTHTSASMTTPAHSSLLTTVTVSATTHPTKGKGSKFDAGSFVGGIVLTLGVLSILYIGCKMYYSRRGIRYRSIDEHDAII</sequence>
<protein>
    <recommendedName>
        <fullName>Porimin</fullName>
    </recommendedName>
    <alternativeName>
        <fullName>Transmembrane protein 123</fullName>
    </alternativeName>
</protein>